<keyword id="KW-0011">Acute phase</keyword>
<keyword id="KW-1015">Disulfide bond</keyword>
<keyword id="KW-0325">Glycoprotein</keyword>
<keyword id="KW-1185">Reference proteome</keyword>
<keyword id="KW-0964">Secreted</keyword>
<keyword id="KW-0732">Signal</keyword>
<keyword id="KW-0813">Transport</keyword>
<name>A1AG_BOVIN</name>
<protein>
    <recommendedName>
        <fullName>Alpha-1-acid glycoprotein</fullName>
    </recommendedName>
    <alternativeName>
        <fullName>Orosomucoid</fullName>
        <shortName>OMD</shortName>
    </alternativeName>
</protein>
<dbReference type="EMBL" id="BC102740">
    <property type="protein sequence ID" value="AAI02741.1"/>
    <property type="molecule type" value="mRNA"/>
</dbReference>
<dbReference type="RefSeq" id="NP_001035592.1">
    <property type="nucleotide sequence ID" value="NM_001040502.2"/>
</dbReference>
<dbReference type="SMR" id="Q3SZR3"/>
<dbReference type="FunCoup" id="Q3SZR3">
    <property type="interactions" value="125"/>
</dbReference>
<dbReference type="STRING" id="9913.ENSBTAP00000022991"/>
<dbReference type="GlyConnect" id="16">
    <property type="glycosylation" value="27 N-Linked glycans (2 sites)"/>
</dbReference>
<dbReference type="GlyCosmos" id="Q3SZR3">
    <property type="glycosylation" value="5 sites, 47 glycans"/>
</dbReference>
<dbReference type="GlyGen" id="Q3SZR3">
    <property type="glycosylation" value="6 sites, 47 N-linked glycans (3 sites), 1 O-linked glycan (1 site)"/>
</dbReference>
<dbReference type="PaxDb" id="9913-ENSBTAP00000022991"/>
<dbReference type="PeptideAtlas" id="Q3SZR3"/>
<dbReference type="GeneID" id="497200"/>
<dbReference type="KEGG" id="bta:497200"/>
<dbReference type="CTD" id="5004"/>
<dbReference type="eggNOG" id="ENOG502S0Q2">
    <property type="taxonomic scope" value="Eukaryota"/>
</dbReference>
<dbReference type="InParanoid" id="Q3SZR3"/>
<dbReference type="OrthoDB" id="9448848at2759"/>
<dbReference type="Proteomes" id="UP000009136">
    <property type="component" value="Unplaced"/>
</dbReference>
<dbReference type="GO" id="GO:0005615">
    <property type="term" value="C:extracellular space"/>
    <property type="evidence" value="ECO:0000318"/>
    <property type="project" value="GO_Central"/>
</dbReference>
<dbReference type="GO" id="GO:0006953">
    <property type="term" value="P:acute-phase response"/>
    <property type="evidence" value="ECO:0007669"/>
    <property type="project" value="UniProtKB-KW"/>
</dbReference>
<dbReference type="GO" id="GO:0002682">
    <property type="term" value="P:regulation of immune system process"/>
    <property type="evidence" value="ECO:0007669"/>
    <property type="project" value="InterPro"/>
</dbReference>
<dbReference type="CDD" id="cd19451">
    <property type="entry name" value="lipocalin_AGP-like"/>
    <property type="match status" value="1"/>
</dbReference>
<dbReference type="FunFam" id="2.40.128.20:FF:000012">
    <property type="entry name" value="Alpha-1-acid glycoprotein 2"/>
    <property type="match status" value="1"/>
</dbReference>
<dbReference type="Gene3D" id="2.40.128.20">
    <property type="match status" value="1"/>
</dbReference>
<dbReference type="InterPro" id="IPR001500">
    <property type="entry name" value="A1A_glycop"/>
</dbReference>
<dbReference type="InterPro" id="IPR012674">
    <property type="entry name" value="Calycin"/>
</dbReference>
<dbReference type="InterPro" id="IPR000566">
    <property type="entry name" value="Lipocln_cytosolic_FA-bd_dom"/>
</dbReference>
<dbReference type="PANTHER" id="PTHR11967">
    <property type="entry name" value="ALPHA-1-ACID GLYCOPROTEIN"/>
    <property type="match status" value="1"/>
</dbReference>
<dbReference type="PANTHER" id="PTHR11967:SF2">
    <property type="entry name" value="ALPHA-1-ACID GLYCOPROTEIN 1"/>
    <property type="match status" value="1"/>
</dbReference>
<dbReference type="Pfam" id="PF00061">
    <property type="entry name" value="Lipocalin"/>
    <property type="match status" value="1"/>
</dbReference>
<dbReference type="PIRSF" id="PIRSF036899">
    <property type="entry name" value="AGP"/>
    <property type="match status" value="1"/>
</dbReference>
<dbReference type="PRINTS" id="PR00708">
    <property type="entry name" value="A1AGLPROTEIN"/>
</dbReference>
<dbReference type="SUPFAM" id="SSF50814">
    <property type="entry name" value="Lipocalins"/>
    <property type="match status" value="1"/>
</dbReference>
<sequence length="202" mass="23182">MALLWALAVLSHLPLLDAQSPECANLMTVAPITNATMDLLSGKWFYIGSAFRNPEYNKSARAIQAAFFYLEPRHAEDKLITREYQTIEDKCVYNCSFIKIYRQNGTLSKVESDREHFVDLLLSKHFRTFMLAASWNGTKNVGVSFYADKPEVTQEQKKEFLDVIKCIGIQESEIIYTDEKKDACGPLEKQHEEERKKETEAS</sequence>
<feature type="signal peptide" evidence="1">
    <location>
        <begin position="1"/>
        <end position="18"/>
    </location>
</feature>
<feature type="chain" id="PRO_0000271395" description="Alpha-1-acid glycoprotein">
    <location>
        <begin position="19"/>
        <end position="202"/>
    </location>
</feature>
<feature type="glycosylation site" description="N-linked (GlcNAc...) asparagine" evidence="2">
    <location>
        <position position="34"/>
    </location>
</feature>
<feature type="glycosylation site" description="N-linked (GlcNAc...) asparagine" evidence="2">
    <location>
        <position position="57"/>
    </location>
</feature>
<feature type="glycosylation site" description="N-linked (GlcNAc...) asparagine" evidence="2">
    <location>
        <position position="94"/>
    </location>
</feature>
<feature type="glycosylation site" description="N-linked (GlcNAc...) asparagine" evidence="2">
    <location>
        <position position="104"/>
    </location>
</feature>
<feature type="glycosylation site" description="N-linked (GlcNAc...) asparagine" evidence="2">
    <location>
        <position position="136"/>
    </location>
</feature>
<feature type="disulfide bond" evidence="1">
    <location>
        <begin position="91"/>
        <end position="184"/>
    </location>
</feature>
<organism>
    <name type="scientific">Bos taurus</name>
    <name type="common">Bovine</name>
    <dbReference type="NCBI Taxonomy" id="9913"/>
    <lineage>
        <taxon>Eukaryota</taxon>
        <taxon>Metazoa</taxon>
        <taxon>Chordata</taxon>
        <taxon>Craniata</taxon>
        <taxon>Vertebrata</taxon>
        <taxon>Euteleostomi</taxon>
        <taxon>Mammalia</taxon>
        <taxon>Eutheria</taxon>
        <taxon>Laurasiatheria</taxon>
        <taxon>Artiodactyla</taxon>
        <taxon>Ruminantia</taxon>
        <taxon>Pecora</taxon>
        <taxon>Bovidae</taxon>
        <taxon>Bovinae</taxon>
        <taxon>Bos</taxon>
    </lineage>
</organism>
<proteinExistence type="evidence at transcript level"/>
<gene>
    <name type="primary">ORM1</name>
    <name type="synonym">AGP</name>
</gene>
<evidence type="ECO:0000250" key="1"/>
<evidence type="ECO:0000255" key="2"/>
<evidence type="ECO:0000305" key="3"/>
<accession>Q3SZR3</accession>
<comment type="function">
    <text evidence="1">Functions as a transport protein in the blood stream. Binds various ligands in the interior of its beta-barrel domain (By similarity). Appears to function in modulating the activity of the immune system during the acute-phase reaction (By similarity).</text>
</comment>
<comment type="subcellular location">
    <subcellularLocation>
        <location evidence="1">Secreted</location>
    </subcellularLocation>
</comment>
<comment type="domain">
    <text evidence="1">Contains a beta-barrel that binds various ligands in its interior.</text>
</comment>
<comment type="similarity">
    <text evidence="3">Belongs to the calycin superfamily. Lipocalin family.</text>
</comment>
<reference key="1">
    <citation type="submission" date="2005-08" db="EMBL/GenBank/DDBJ databases">
        <authorList>
            <consortium name="NIH - Mammalian Gene Collection (MGC) project"/>
        </authorList>
    </citation>
    <scope>NUCLEOTIDE SEQUENCE [LARGE SCALE MRNA]</scope>
    <source>
        <strain>Hereford</strain>
        <tissue>Testis</tissue>
    </source>
</reference>